<evidence type="ECO:0000255" key="1">
    <source>
        <dbReference type="HAMAP-Rule" id="MF_00049"/>
    </source>
</evidence>
<name>SYL_BURP0</name>
<gene>
    <name evidence="1" type="primary">leuS</name>
    <name type="ordered locus">BURPS1106A_3450</name>
</gene>
<proteinExistence type="inferred from homology"/>
<comment type="catalytic activity">
    <reaction evidence="1">
        <text>tRNA(Leu) + L-leucine + ATP = L-leucyl-tRNA(Leu) + AMP + diphosphate</text>
        <dbReference type="Rhea" id="RHEA:11688"/>
        <dbReference type="Rhea" id="RHEA-COMP:9613"/>
        <dbReference type="Rhea" id="RHEA-COMP:9622"/>
        <dbReference type="ChEBI" id="CHEBI:30616"/>
        <dbReference type="ChEBI" id="CHEBI:33019"/>
        <dbReference type="ChEBI" id="CHEBI:57427"/>
        <dbReference type="ChEBI" id="CHEBI:78442"/>
        <dbReference type="ChEBI" id="CHEBI:78494"/>
        <dbReference type="ChEBI" id="CHEBI:456215"/>
        <dbReference type="EC" id="6.1.1.4"/>
    </reaction>
</comment>
<comment type="subcellular location">
    <subcellularLocation>
        <location evidence="1">Cytoplasm</location>
    </subcellularLocation>
</comment>
<comment type="similarity">
    <text evidence="1">Belongs to the class-I aminoacyl-tRNA synthetase family.</text>
</comment>
<protein>
    <recommendedName>
        <fullName evidence="1">Leucine--tRNA ligase</fullName>
        <ecNumber evidence="1">6.1.1.4</ecNumber>
    </recommendedName>
    <alternativeName>
        <fullName evidence="1">Leucyl-tRNA synthetase</fullName>
        <shortName evidence="1">LeuRS</shortName>
    </alternativeName>
</protein>
<reference key="1">
    <citation type="journal article" date="2010" name="Genome Biol. Evol.">
        <title>Continuing evolution of Burkholderia mallei through genome reduction and large-scale rearrangements.</title>
        <authorList>
            <person name="Losada L."/>
            <person name="Ronning C.M."/>
            <person name="DeShazer D."/>
            <person name="Woods D."/>
            <person name="Fedorova N."/>
            <person name="Kim H.S."/>
            <person name="Shabalina S.A."/>
            <person name="Pearson T.R."/>
            <person name="Brinkac L."/>
            <person name="Tan P."/>
            <person name="Nandi T."/>
            <person name="Crabtree J."/>
            <person name="Badger J."/>
            <person name="Beckstrom-Sternberg S."/>
            <person name="Saqib M."/>
            <person name="Schutzer S.E."/>
            <person name="Keim P."/>
            <person name="Nierman W.C."/>
        </authorList>
    </citation>
    <scope>NUCLEOTIDE SEQUENCE [LARGE SCALE GENOMIC DNA]</scope>
    <source>
        <strain>1106a</strain>
    </source>
</reference>
<organism>
    <name type="scientific">Burkholderia pseudomallei (strain 1106a)</name>
    <dbReference type="NCBI Taxonomy" id="357348"/>
    <lineage>
        <taxon>Bacteria</taxon>
        <taxon>Pseudomonadati</taxon>
        <taxon>Pseudomonadota</taxon>
        <taxon>Betaproteobacteria</taxon>
        <taxon>Burkholderiales</taxon>
        <taxon>Burkholderiaceae</taxon>
        <taxon>Burkholderia</taxon>
        <taxon>pseudomallei group</taxon>
    </lineage>
</organism>
<dbReference type="EC" id="6.1.1.4" evidence="1"/>
<dbReference type="EMBL" id="CP000572">
    <property type="protein sequence ID" value="ABN89129.1"/>
    <property type="molecule type" value="Genomic_DNA"/>
</dbReference>
<dbReference type="RefSeq" id="WP_004535294.1">
    <property type="nucleotide sequence ID" value="NC_009076.1"/>
</dbReference>
<dbReference type="SMR" id="A3NZB6"/>
<dbReference type="GeneID" id="93061536"/>
<dbReference type="KEGG" id="bpl:BURPS1106A_3450"/>
<dbReference type="HOGENOM" id="CLU_004427_0_0_4"/>
<dbReference type="Proteomes" id="UP000006738">
    <property type="component" value="Chromosome I"/>
</dbReference>
<dbReference type="GO" id="GO:0005829">
    <property type="term" value="C:cytosol"/>
    <property type="evidence" value="ECO:0007669"/>
    <property type="project" value="TreeGrafter"/>
</dbReference>
<dbReference type="GO" id="GO:0002161">
    <property type="term" value="F:aminoacyl-tRNA deacylase activity"/>
    <property type="evidence" value="ECO:0007669"/>
    <property type="project" value="InterPro"/>
</dbReference>
<dbReference type="GO" id="GO:0005524">
    <property type="term" value="F:ATP binding"/>
    <property type="evidence" value="ECO:0007669"/>
    <property type="project" value="UniProtKB-UniRule"/>
</dbReference>
<dbReference type="GO" id="GO:0004823">
    <property type="term" value="F:leucine-tRNA ligase activity"/>
    <property type="evidence" value="ECO:0007669"/>
    <property type="project" value="UniProtKB-UniRule"/>
</dbReference>
<dbReference type="GO" id="GO:0006429">
    <property type="term" value="P:leucyl-tRNA aminoacylation"/>
    <property type="evidence" value="ECO:0007669"/>
    <property type="project" value="UniProtKB-UniRule"/>
</dbReference>
<dbReference type="CDD" id="cd07958">
    <property type="entry name" value="Anticodon_Ia_Leu_BEm"/>
    <property type="match status" value="1"/>
</dbReference>
<dbReference type="CDD" id="cd00812">
    <property type="entry name" value="LeuRS_core"/>
    <property type="match status" value="1"/>
</dbReference>
<dbReference type="FunFam" id="1.10.730.10:FF:000002">
    <property type="entry name" value="Leucine--tRNA ligase"/>
    <property type="match status" value="1"/>
</dbReference>
<dbReference type="FunFam" id="2.20.28.290:FF:000001">
    <property type="entry name" value="Leucine--tRNA ligase"/>
    <property type="match status" value="1"/>
</dbReference>
<dbReference type="FunFam" id="3.40.50.620:FF:000003">
    <property type="entry name" value="Leucine--tRNA ligase"/>
    <property type="match status" value="1"/>
</dbReference>
<dbReference type="FunFam" id="3.40.50.620:FF:000056">
    <property type="entry name" value="Leucine--tRNA ligase"/>
    <property type="match status" value="1"/>
</dbReference>
<dbReference type="FunFam" id="3.90.740.10:FF:000012">
    <property type="entry name" value="Leucine--tRNA ligase"/>
    <property type="match status" value="1"/>
</dbReference>
<dbReference type="Gene3D" id="2.20.28.290">
    <property type="match status" value="1"/>
</dbReference>
<dbReference type="Gene3D" id="3.10.20.590">
    <property type="match status" value="1"/>
</dbReference>
<dbReference type="Gene3D" id="3.40.50.620">
    <property type="entry name" value="HUPs"/>
    <property type="match status" value="2"/>
</dbReference>
<dbReference type="Gene3D" id="1.10.730.10">
    <property type="entry name" value="Isoleucyl-tRNA Synthetase, Domain 1"/>
    <property type="match status" value="1"/>
</dbReference>
<dbReference type="Gene3D" id="3.90.740.10">
    <property type="entry name" value="Valyl/Leucyl/Isoleucyl-tRNA synthetase, editing domain"/>
    <property type="match status" value="1"/>
</dbReference>
<dbReference type="HAMAP" id="MF_00049_B">
    <property type="entry name" value="Leu_tRNA_synth_B"/>
    <property type="match status" value="1"/>
</dbReference>
<dbReference type="InterPro" id="IPR001412">
    <property type="entry name" value="aa-tRNA-synth_I_CS"/>
</dbReference>
<dbReference type="InterPro" id="IPR002300">
    <property type="entry name" value="aa-tRNA-synth_Ia"/>
</dbReference>
<dbReference type="InterPro" id="IPR002302">
    <property type="entry name" value="Leu-tRNA-ligase"/>
</dbReference>
<dbReference type="InterPro" id="IPR025709">
    <property type="entry name" value="Leu_tRNA-synth_edit"/>
</dbReference>
<dbReference type="InterPro" id="IPR013155">
    <property type="entry name" value="M/V/L/I-tRNA-synth_anticd-bd"/>
</dbReference>
<dbReference type="InterPro" id="IPR015413">
    <property type="entry name" value="Methionyl/Leucyl_tRNA_Synth"/>
</dbReference>
<dbReference type="InterPro" id="IPR014729">
    <property type="entry name" value="Rossmann-like_a/b/a_fold"/>
</dbReference>
<dbReference type="InterPro" id="IPR009080">
    <property type="entry name" value="tRNAsynth_Ia_anticodon-bd"/>
</dbReference>
<dbReference type="InterPro" id="IPR009008">
    <property type="entry name" value="Val/Leu/Ile-tRNA-synth_edit"/>
</dbReference>
<dbReference type="NCBIfam" id="TIGR00396">
    <property type="entry name" value="leuS_bact"/>
    <property type="match status" value="1"/>
</dbReference>
<dbReference type="PANTHER" id="PTHR43740:SF2">
    <property type="entry name" value="LEUCINE--TRNA LIGASE, MITOCHONDRIAL"/>
    <property type="match status" value="1"/>
</dbReference>
<dbReference type="PANTHER" id="PTHR43740">
    <property type="entry name" value="LEUCYL-TRNA SYNTHETASE"/>
    <property type="match status" value="1"/>
</dbReference>
<dbReference type="Pfam" id="PF08264">
    <property type="entry name" value="Anticodon_1"/>
    <property type="match status" value="1"/>
</dbReference>
<dbReference type="Pfam" id="PF00133">
    <property type="entry name" value="tRNA-synt_1"/>
    <property type="match status" value="2"/>
</dbReference>
<dbReference type="Pfam" id="PF13603">
    <property type="entry name" value="tRNA-synt_1_2"/>
    <property type="match status" value="1"/>
</dbReference>
<dbReference type="Pfam" id="PF09334">
    <property type="entry name" value="tRNA-synt_1g"/>
    <property type="match status" value="1"/>
</dbReference>
<dbReference type="PRINTS" id="PR00985">
    <property type="entry name" value="TRNASYNTHLEU"/>
</dbReference>
<dbReference type="SUPFAM" id="SSF47323">
    <property type="entry name" value="Anticodon-binding domain of a subclass of class I aminoacyl-tRNA synthetases"/>
    <property type="match status" value="1"/>
</dbReference>
<dbReference type="SUPFAM" id="SSF52374">
    <property type="entry name" value="Nucleotidylyl transferase"/>
    <property type="match status" value="1"/>
</dbReference>
<dbReference type="SUPFAM" id="SSF50677">
    <property type="entry name" value="ValRS/IleRS/LeuRS editing domain"/>
    <property type="match status" value="1"/>
</dbReference>
<dbReference type="PROSITE" id="PS00178">
    <property type="entry name" value="AA_TRNA_LIGASE_I"/>
    <property type="match status" value="1"/>
</dbReference>
<sequence length="864" mass="96151">MHERYVPADVEAAAQSDWRAADAYRSKEDANRKKFYCVSMLPYPSGKLHMGHVRNYTINDVMYRYLRMNGYNTLMPMGWDAFGMPAENAAMANGVPPAQWTYENIAYMKKQMQSMGLAIDWSREVTTCKPDYYKWNQWLFLKMLEKGVAYKKTGTVNWDPVDQTVLANEQVIDGRGWRSGALVEKREIPMYYMRITQYADELLNDLDGLGWPERVKVMQHNWIGKSFGVNFGFPYELDGEKKLLRVFTTRADTIMGVTFCAIAAEHPLAARLARDKPALQAFIDECKRGGVAEADIATMEKKGVATGFSVSHPLTGEPVEVWIGNYVLMSYGEGAVMGVPAHDERDFAFAKKYGLPIRQVIAVEGETYSTDAWQEWYGDKTRAVCVNSGKYDGLAHDAAVDAIAAELKAGGLGDKQITYRLRDWGISRQRYWGTPIPIIHCPSCGDVPVPEQDLPVVLPEDLVPDGTGNPLAKSDAFLNCTCPKCGAAAKRETDTMDTFVDSAWYFSRYAAPDAQTMVDARTDYWMPMDQYIGGIEHAILHLLYSRFWAKVMRDLGLVAFGEPAKNLLTQGMVLNETFYREDAAGKKTWYNPADVTVSFDDKGRPVGAVLKSDGQPVELGGIEKMSKSKNNGVDPQMLIDHYGADTARLFTMFAAPPEQQLEWSGAGVDGASRFLRRVWAFGFANREALAVRAPFDAAQLAEADKTLRREIHGVLKQADFDYQRLQYNTVVSAAMKMLNAIEGAKGATPAVLRETYGVLLRVLYPVVPHVTFELWKALGYADEFGPLLDAPWPKVDEAALEQAEIELVLQVNGKVRGALKVAKDASREAIEAAAVADGMFAKFAEGRPAKKIIVVPGRLVNVVV</sequence>
<keyword id="KW-0030">Aminoacyl-tRNA synthetase</keyword>
<keyword id="KW-0067">ATP-binding</keyword>
<keyword id="KW-0963">Cytoplasm</keyword>
<keyword id="KW-0436">Ligase</keyword>
<keyword id="KW-0547">Nucleotide-binding</keyword>
<keyword id="KW-0648">Protein biosynthesis</keyword>
<feature type="chain" id="PRO_1000009310" description="Leucine--tRNA ligase">
    <location>
        <begin position="1"/>
        <end position="864"/>
    </location>
</feature>
<feature type="short sequence motif" description="'HIGH' region">
    <location>
        <begin position="42"/>
        <end position="52"/>
    </location>
</feature>
<feature type="short sequence motif" description="'KMSKS' region">
    <location>
        <begin position="624"/>
        <end position="628"/>
    </location>
</feature>
<feature type="binding site" evidence="1">
    <location>
        <position position="627"/>
    </location>
    <ligand>
        <name>ATP</name>
        <dbReference type="ChEBI" id="CHEBI:30616"/>
    </ligand>
</feature>
<accession>A3NZB6</accession>